<reference key="1">
    <citation type="journal article" date="2004" name="Nat. Genet.">
        <title>Complete sequencing and characterization of 21,243 full-length human cDNAs.</title>
        <authorList>
            <person name="Ota T."/>
            <person name="Suzuki Y."/>
            <person name="Nishikawa T."/>
            <person name="Otsuki T."/>
            <person name="Sugiyama T."/>
            <person name="Irie R."/>
            <person name="Wakamatsu A."/>
            <person name="Hayashi K."/>
            <person name="Sato H."/>
            <person name="Nagai K."/>
            <person name="Kimura K."/>
            <person name="Makita H."/>
            <person name="Sekine M."/>
            <person name="Obayashi M."/>
            <person name="Nishi T."/>
            <person name="Shibahara T."/>
            <person name="Tanaka T."/>
            <person name="Ishii S."/>
            <person name="Yamamoto J."/>
            <person name="Saito K."/>
            <person name="Kawai Y."/>
            <person name="Isono Y."/>
            <person name="Nakamura Y."/>
            <person name="Nagahari K."/>
            <person name="Murakami K."/>
            <person name="Yasuda T."/>
            <person name="Iwayanagi T."/>
            <person name="Wagatsuma M."/>
            <person name="Shiratori A."/>
            <person name="Sudo H."/>
            <person name="Hosoiri T."/>
            <person name="Kaku Y."/>
            <person name="Kodaira H."/>
            <person name="Kondo H."/>
            <person name="Sugawara M."/>
            <person name="Takahashi M."/>
            <person name="Kanda K."/>
            <person name="Yokoi T."/>
            <person name="Furuya T."/>
            <person name="Kikkawa E."/>
            <person name="Omura Y."/>
            <person name="Abe K."/>
            <person name="Kamihara K."/>
            <person name="Katsuta N."/>
            <person name="Sato K."/>
            <person name="Tanikawa M."/>
            <person name="Yamazaki M."/>
            <person name="Ninomiya K."/>
            <person name="Ishibashi T."/>
            <person name="Yamashita H."/>
            <person name="Murakawa K."/>
            <person name="Fujimori K."/>
            <person name="Tanai H."/>
            <person name="Kimata M."/>
            <person name="Watanabe M."/>
            <person name="Hiraoka S."/>
            <person name="Chiba Y."/>
            <person name="Ishida S."/>
            <person name="Ono Y."/>
            <person name="Takiguchi S."/>
            <person name="Watanabe S."/>
            <person name="Yosida M."/>
            <person name="Hotuta T."/>
            <person name="Kusano J."/>
            <person name="Kanehori K."/>
            <person name="Takahashi-Fujii A."/>
            <person name="Hara H."/>
            <person name="Tanase T.-O."/>
            <person name="Nomura Y."/>
            <person name="Togiya S."/>
            <person name="Komai F."/>
            <person name="Hara R."/>
            <person name="Takeuchi K."/>
            <person name="Arita M."/>
            <person name="Imose N."/>
            <person name="Musashino K."/>
            <person name="Yuuki H."/>
            <person name="Oshima A."/>
            <person name="Sasaki N."/>
            <person name="Aotsuka S."/>
            <person name="Yoshikawa Y."/>
            <person name="Matsunawa H."/>
            <person name="Ichihara T."/>
            <person name="Shiohata N."/>
            <person name="Sano S."/>
            <person name="Moriya S."/>
            <person name="Momiyama H."/>
            <person name="Satoh N."/>
            <person name="Takami S."/>
            <person name="Terashima Y."/>
            <person name="Suzuki O."/>
            <person name="Nakagawa S."/>
            <person name="Senoh A."/>
            <person name="Mizoguchi H."/>
            <person name="Goto Y."/>
            <person name="Shimizu F."/>
            <person name="Wakebe H."/>
            <person name="Hishigaki H."/>
            <person name="Watanabe T."/>
            <person name="Sugiyama A."/>
            <person name="Takemoto M."/>
            <person name="Kawakami B."/>
            <person name="Yamazaki M."/>
            <person name="Watanabe K."/>
            <person name="Kumagai A."/>
            <person name="Itakura S."/>
            <person name="Fukuzumi Y."/>
            <person name="Fujimori Y."/>
            <person name="Komiyama M."/>
            <person name="Tashiro H."/>
            <person name="Tanigami A."/>
            <person name="Fujiwara T."/>
            <person name="Ono T."/>
            <person name="Yamada K."/>
            <person name="Fujii Y."/>
            <person name="Ozaki K."/>
            <person name="Hirao M."/>
            <person name="Ohmori Y."/>
            <person name="Kawabata A."/>
            <person name="Hikiji T."/>
            <person name="Kobatake N."/>
            <person name="Inagaki H."/>
            <person name="Ikema Y."/>
            <person name="Okamoto S."/>
            <person name="Okitani R."/>
            <person name="Kawakami T."/>
            <person name="Noguchi S."/>
            <person name="Itoh T."/>
            <person name="Shigeta K."/>
            <person name="Senba T."/>
            <person name="Matsumura K."/>
            <person name="Nakajima Y."/>
            <person name="Mizuno T."/>
            <person name="Morinaga M."/>
            <person name="Sasaki M."/>
            <person name="Togashi T."/>
            <person name="Oyama M."/>
            <person name="Hata H."/>
            <person name="Watanabe M."/>
            <person name="Komatsu T."/>
            <person name="Mizushima-Sugano J."/>
            <person name="Satoh T."/>
            <person name="Shirai Y."/>
            <person name="Takahashi Y."/>
            <person name="Nakagawa K."/>
            <person name="Okumura K."/>
            <person name="Nagase T."/>
            <person name="Nomura N."/>
            <person name="Kikuchi H."/>
            <person name="Masuho Y."/>
            <person name="Yamashita R."/>
            <person name="Nakai K."/>
            <person name="Yada T."/>
            <person name="Nakamura Y."/>
            <person name="Ohara O."/>
            <person name="Isogai T."/>
            <person name="Sugano S."/>
        </authorList>
    </citation>
    <scope>NUCLEOTIDE SEQUENCE [LARGE SCALE MRNA]</scope>
    <source>
        <tissue>Small intestine</tissue>
    </source>
</reference>
<reference key="2">
    <citation type="journal article" date="2006" name="Nature">
        <title>DNA sequence of human chromosome 17 and analysis of rearrangement in the human lineage.</title>
        <authorList>
            <person name="Zody M.C."/>
            <person name="Garber M."/>
            <person name="Adams D.J."/>
            <person name="Sharpe T."/>
            <person name="Harrow J."/>
            <person name="Lupski J.R."/>
            <person name="Nicholson C."/>
            <person name="Searle S.M."/>
            <person name="Wilming L."/>
            <person name="Young S.K."/>
            <person name="Abouelleil A."/>
            <person name="Allen N.R."/>
            <person name="Bi W."/>
            <person name="Bloom T."/>
            <person name="Borowsky M.L."/>
            <person name="Bugalter B.E."/>
            <person name="Butler J."/>
            <person name="Chang J.L."/>
            <person name="Chen C.-K."/>
            <person name="Cook A."/>
            <person name="Corum B."/>
            <person name="Cuomo C.A."/>
            <person name="de Jong P.J."/>
            <person name="DeCaprio D."/>
            <person name="Dewar K."/>
            <person name="FitzGerald M."/>
            <person name="Gilbert J."/>
            <person name="Gibson R."/>
            <person name="Gnerre S."/>
            <person name="Goldstein S."/>
            <person name="Grafham D.V."/>
            <person name="Grocock R."/>
            <person name="Hafez N."/>
            <person name="Hagopian D.S."/>
            <person name="Hart E."/>
            <person name="Norman C.H."/>
            <person name="Humphray S."/>
            <person name="Jaffe D.B."/>
            <person name="Jones M."/>
            <person name="Kamal M."/>
            <person name="Khodiyar V.K."/>
            <person name="LaButti K."/>
            <person name="Laird G."/>
            <person name="Lehoczky J."/>
            <person name="Liu X."/>
            <person name="Lokyitsang T."/>
            <person name="Loveland J."/>
            <person name="Lui A."/>
            <person name="Macdonald P."/>
            <person name="Major J.E."/>
            <person name="Matthews L."/>
            <person name="Mauceli E."/>
            <person name="McCarroll S.A."/>
            <person name="Mihalev A.H."/>
            <person name="Mudge J."/>
            <person name="Nguyen C."/>
            <person name="Nicol R."/>
            <person name="O'Leary S.B."/>
            <person name="Osoegawa K."/>
            <person name="Schwartz D.C."/>
            <person name="Shaw-Smith C."/>
            <person name="Stankiewicz P."/>
            <person name="Steward C."/>
            <person name="Swarbreck D."/>
            <person name="Venkataraman V."/>
            <person name="Whittaker C.A."/>
            <person name="Yang X."/>
            <person name="Zimmer A.R."/>
            <person name="Bradley A."/>
            <person name="Hubbard T."/>
            <person name="Birren B.W."/>
            <person name="Rogers J."/>
            <person name="Lander E.S."/>
            <person name="Nusbaum C."/>
        </authorList>
    </citation>
    <scope>NUCLEOTIDE SEQUENCE [LARGE SCALE GENOMIC DNA]</scope>
</reference>
<reference key="3">
    <citation type="submission" date="2005-07" db="EMBL/GenBank/DDBJ databases">
        <authorList>
            <person name="Mural R.J."/>
            <person name="Istrail S."/>
            <person name="Sutton G.G."/>
            <person name="Florea L."/>
            <person name="Halpern A.L."/>
            <person name="Mobarry C.M."/>
            <person name="Lippert R."/>
            <person name="Walenz B."/>
            <person name="Shatkay H."/>
            <person name="Dew I."/>
            <person name="Miller J.R."/>
            <person name="Flanigan M.J."/>
            <person name="Edwards N.J."/>
            <person name="Bolanos R."/>
            <person name="Fasulo D."/>
            <person name="Halldorsson B.V."/>
            <person name="Hannenhalli S."/>
            <person name="Turner R."/>
            <person name="Yooseph S."/>
            <person name="Lu F."/>
            <person name="Nusskern D.R."/>
            <person name="Shue B.C."/>
            <person name="Zheng X.H."/>
            <person name="Zhong F."/>
            <person name="Delcher A.L."/>
            <person name="Huson D.H."/>
            <person name="Kravitz S.A."/>
            <person name="Mouchard L."/>
            <person name="Reinert K."/>
            <person name="Remington K.A."/>
            <person name="Clark A.G."/>
            <person name="Waterman M.S."/>
            <person name="Eichler E.E."/>
            <person name="Adams M.D."/>
            <person name="Hunkapiller M.W."/>
            <person name="Myers E.W."/>
            <person name="Venter J.C."/>
        </authorList>
    </citation>
    <scope>NUCLEOTIDE SEQUENCE [LARGE SCALE GENOMIC DNA]</scope>
</reference>
<reference key="4">
    <citation type="journal article" date="2008" name="Proc. Natl. Acad. Sci. U.S.A.">
        <title>A quantitative atlas of mitotic phosphorylation.</title>
        <authorList>
            <person name="Dephoure N."/>
            <person name="Zhou C."/>
            <person name="Villen J."/>
            <person name="Beausoleil S.A."/>
            <person name="Bakalarski C.E."/>
            <person name="Elledge S.J."/>
            <person name="Gygi S.P."/>
        </authorList>
    </citation>
    <scope>IDENTIFICATION BY MASS SPECTROMETRY [LARGE SCALE ANALYSIS]</scope>
    <source>
        <tissue>Cervix carcinoma</tissue>
    </source>
</reference>
<reference key="5">
    <citation type="journal article" date="2009" name="Science">
        <title>Lysine acetylation targets protein complexes and co-regulates major cellular functions.</title>
        <authorList>
            <person name="Choudhary C."/>
            <person name="Kumar C."/>
            <person name="Gnad F."/>
            <person name="Nielsen M.L."/>
            <person name="Rehman M."/>
            <person name="Walther T.C."/>
            <person name="Olsen J.V."/>
            <person name="Mann M."/>
        </authorList>
    </citation>
    <scope>ACETYLATION [LARGE SCALE ANALYSIS] AT LYS-79</scope>
    <scope>IDENTIFICATION BY MASS SPECTROMETRY [LARGE SCALE ANALYSIS]</scope>
</reference>
<reference key="6">
    <citation type="journal article" date="2010" name="Sci. Signal.">
        <title>Quantitative phosphoproteomics reveals widespread full phosphorylation site occupancy during mitosis.</title>
        <authorList>
            <person name="Olsen J.V."/>
            <person name="Vermeulen M."/>
            <person name="Santamaria A."/>
            <person name="Kumar C."/>
            <person name="Miller M.L."/>
            <person name="Jensen L.J."/>
            <person name="Gnad F."/>
            <person name="Cox J."/>
            <person name="Jensen T.S."/>
            <person name="Nigg E.A."/>
            <person name="Brunak S."/>
            <person name="Mann M."/>
        </authorList>
    </citation>
    <scope>PHOSPHORYLATION [LARGE SCALE ANALYSIS] AT SER-21</scope>
    <scope>IDENTIFICATION BY MASS SPECTROMETRY [LARGE SCALE ANALYSIS]</scope>
    <source>
        <tissue>Cervix carcinoma</tissue>
    </source>
</reference>
<reference key="7">
    <citation type="journal article" date="2011" name="Sci. Signal.">
        <title>System-wide temporal characterization of the proteome and phosphoproteome of human embryonic stem cell differentiation.</title>
        <authorList>
            <person name="Rigbolt K.T."/>
            <person name="Prokhorova T.A."/>
            <person name="Akimov V."/>
            <person name="Henningsen J."/>
            <person name="Johansen P.T."/>
            <person name="Kratchmarova I."/>
            <person name="Kassem M."/>
            <person name="Mann M."/>
            <person name="Olsen J.V."/>
            <person name="Blagoev B."/>
        </authorList>
    </citation>
    <scope>PHOSPHORYLATION [LARGE SCALE ANALYSIS] AT SER-21 AND SER-24</scope>
    <scope>IDENTIFICATION BY MASS SPECTROMETRY [LARGE SCALE ANALYSIS]</scope>
</reference>
<reference key="8">
    <citation type="journal article" date="2014" name="J. Proteomics">
        <title>An enzyme assisted RP-RPLC approach for in-depth analysis of human liver phosphoproteome.</title>
        <authorList>
            <person name="Bian Y."/>
            <person name="Song C."/>
            <person name="Cheng K."/>
            <person name="Dong M."/>
            <person name="Wang F."/>
            <person name="Huang J."/>
            <person name="Sun D."/>
            <person name="Wang L."/>
            <person name="Ye M."/>
            <person name="Zou H."/>
        </authorList>
    </citation>
    <scope>IDENTIFICATION BY MASS SPECTROMETRY [LARGE SCALE ANALYSIS]</scope>
    <source>
        <tissue>Liver</tissue>
    </source>
</reference>
<reference key="9">
    <citation type="journal article" date="2015" name="Biomolecules">
        <title>Comprehensive protein interactome analysis of a key RNA helicase: detection of novel stress granule proteins.</title>
        <authorList>
            <person name="Bish R."/>
            <person name="Cuevas-Polo N."/>
            <person name="Cheng Z."/>
            <person name="Hambardzumyan D."/>
            <person name="Munschauer M."/>
            <person name="Landthaler M."/>
            <person name="Vogel C."/>
        </authorList>
    </citation>
    <scope>INTERACTION WITH DDX6 AND MCRIP2</scope>
    <scope>SUBCELLULAR LOCATION</scope>
</reference>
<reference key="10">
    <citation type="journal article" date="2015" name="Mol. Cell">
        <title>MCRIP1, an ERK substrate, mediates ERK-induced gene silencing during epithelial-mesenchymal transition by regulating the co-repressor CtBP.</title>
        <authorList>
            <person name="Ichikawa K."/>
            <person name="Kubota Y."/>
            <person name="Nakamura T."/>
            <person name="Weng J.S."/>
            <person name="Tomida T."/>
            <person name="Saito H."/>
            <person name="Takekawa M."/>
        </authorList>
    </citation>
    <scope>PHOSPHORYLATION AT SER-21 AND THR-30</scope>
    <scope>SUBCELLULAR LOCATION</scope>
    <scope>INTERACTION WITH CTBP1 AND CTBP2</scope>
    <scope>FUNCTION</scope>
</reference>
<keyword id="KW-0007">Acetylation</keyword>
<keyword id="KW-0963">Cytoplasm</keyword>
<keyword id="KW-0539">Nucleus</keyword>
<keyword id="KW-0597">Phosphoprotein</keyword>
<keyword id="KW-1267">Proteomics identification</keyword>
<keyword id="KW-1185">Reference proteome</keyword>
<gene>
    <name evidence="5 8" type="primary">MCRIP1</name>
    <name type="synonym">FAM195B</name>
    <name evidence="6" type="synonym">GRAN2</name>
</gene>
<dbReference type="EMBL" id="AK125584">
    <property type="protein sequence ID" value="BAC86211.1"/>
    <property type="status" value="ALT_SEQ"/>
    <property type="molecule type" value="mRNA"/>
</dbReference>
<dbReference type="EMBL" id="AC174470">
    <property type="status" value="NOT_ANNOTATED_CDS"/>
    <property type="molecule type" value="Genomic_DNA"/>
</dbReference>
<dbReference type="EMBL" id="CH471099">
    <property type="protein sequence ID" value="EAW89687.1"/>
    <property type="molecule type" value="Genomic_DNA"/>
</dbReference>
<dbReference type="CCDS" id="CCDS45814.1"/>
<dbReference type="RefSeq" id="NP_001087236.1">
    <property type="nucleotide sequence ID" value="NM_001093767.3"/>
</dbReference>
<dbReference type="RefSeq" id="NP_997251.2">
    <property type="nucleotide sequence ID" value="NM_207368.5"/>
</dbReference>
<dbReference type="BioGRID" id="131518">
    <property type="interactions" value="53"/>
</dbReference>
<dbReference type="FunCoup" id="C9JLW8">
    <property type="interactions" value="867"/>
</dbReference>
<dbReference type="IntAct" id="C9JLW8">
    <property type="interactions" value="26"/>
</dbReference>
<dbReference type="MINT" id="C9JLW8"/>
<dbReference type="STRING" id="9606.ENSP00000461433"/>
<dbReference type="GlyGen" id="C9JLW8">
    <property type="glycosylation" value="1 site, 1 O-linked glycan (1 site)"/>
</dbReference>
<dbReference type="iPTMnet" id="C9JLW8"/>
<dbReference type="PhosphoSitePlus" id="C9JLW8"/>
<dbReference type="BioMuta" id="MCRIP1"/>
<dbReference type="jPOST" id="C9JLW8"/>
<dbReference type="MassIVE" id="C9JLW8"/>
<dbReference type="PaxDb" id="9606-ENSP00000461433"/>
<dbReference type="PeptideAtlas" id="C9JLW8"/>
<dbReference type="ProteomicsDB" id="10766"/>
<dbReference type="Pumba" id="C9JLW8"/>
<dbReference type="TopDownProteomics" id="C9JLW8"/>
<dbReference type="Antibodypedia" id="63491">
    <property type="antibodies" value="30 antibodies from 10 providers"/>
</dbReference>
<dbReference type="DNASU" id="348262"/>
<dbReference type="Ensembl" id="ENST00000455127.7">
    <property type="protein sequence ID" value="ENSP00000409009.2"/>
    <property type="gene ID" value="ENSG00000225663.8"/>
</dbReference>
<dbReference type="Ensembl" id="ENST00000538396.5">
    <property type="protein sequence ID" value="ENSP00000445543.1"/>
    <property type="gene ID" value="ENSG00000225663.8"/>
</dbReference>
<dbReference type="Ensembl" id="ENST00000574190.5">
    <property type="protein sequence ID" value="ENSP00000458720.1"/>
    <property type="gene ID" value="ENSG00000225663.8"/>
</dbReference>
<dbReference type="Ensembl" id="ENST00000576730.5">
    <property type="protein sequence ID" value="ENSP00000458707.1"/>
    <property type="gene ID" value="ENSG00000225663.8"/>
</dbReference>
<dbReference type="Ensembl" id="ENST00000672201.1">
    <property type="protein sequence ID" value="ENSP00000500493.1"/>
    <property type="gene ID" value="ENSG00000288213.1"/>
</dbReference>
<dbReference type="Ensembl" id="ENST00000672501.1">
    <property type="protein sequence ID" value="ENSP00000499966.1"/>
    <property type="gene ID" value="ENSG00000288213.1"/>
</dbReference>
<dbReference type="Ensembl" id="ENST00000673154.1">
    <property type="protein sequence ID" value="ENSP00000500382.1"/>
    <property type="gene ID" value="ENSG00000288213.1"/>
</dbReference>
<dbReference type="Ensembl" id="ENST00000673369.1">
    <property type="protein sequence ID" value="ENSP00000500656.1"/>
    <property type="gene ID" value="ENSG00000288213.1"/>
</dbReference>
<dbReference type="GeneID" id="348262"/>
<dbReference type="KEGG" id="hsa:348262"/>
<dbReference type="MANE-Select" id="ENST00000455127.7">
    <property type="protein sequence ID" value="ENSP00000409009.2"/>
    <property type="RefSeq nucleotide sequence ID" value="NM_207368.5"/>
    <property type="RefSeq protein sequence ID" value="NP_997251.2"/>
</dbReference>
<dbReference type="UCSC" id="uc010wuy.3">
    <property type="organism name" value="human"/>
</dbReference>
<dbReference type="AGR" id="HGNC:28007"/>
<dbReference type="CTD" id="348262"/>
<dbReference type="DisGeNET" id="348262"/>
<dbReference type="GeneCards" id="MCRIP1"/>
<dbReference type="HGNC" id="HGNC:28007">
    <property type="gene designation" value="MCRIP1"/>
</dbReference>
<dbReference type="HPA" id="ENSG00000225663">
    <property type="expression patterns" value="Low tissue specificity"/>
</dbReference>
<dbReference type="MIM" id="616514">
    <property type="type" value="gene"/>
</dbReference>
<dbReference type="neXtProt" id="NX_C9JLW8"/>
<dbReference type="OpenTargets" id="ENSG00000225663"/>
<dbReference type="PharmGKB" id="PA165431912"/>
<dbReference type="VEuPathDB" id="HostDB:ENSG00000225663"/>
<dbReference type="eggNOG" id="ENOG502S25D">
    <property type="taxonomic scope" value="Eukaryota"/>
</dbReference>
<dbReference type="GeneTree" id="ENSGT00940000161850"/>
<dbReference type="HOGENOM" id="CLU_161057_0_0_1"/>
<dbReference type="InParanoid" id="C9JLW8"/>
<dbReference type="OMA" id="PQNHERN"/>
<dbReference type="OrthoDB" id="8170061at2759"/>
<dbReference type="PAN-GO" id="C9JLW8">
    <property type="GO annotations" value="0 GO annotations based on evolutionary models"/>
</dbReference>
<dbReference type="PhylomeDB" id="C9JLW8"/>
<dbReference type="TreeFam" id="TF326620"/>
<dbReference type="PathwayCommons" id="C9JLW8"/>
<dbReference type="SignaLink" id="C9JLW8"/>
<dbReference type="SIGNOR" id="C9JLW8"/>
<dbReference type="BioGRID-ORCS" id="348262">
    <property type="hits" value="13 hits in 1149 CRISPR screens"/>
</dbReference>
<dbReference type="CD-CODE" id="232F8A39">
    <property type="entry name" value="P-body"/>
</dbReference>
<dbReference type="CD-CODE" id="DEE660B4">
    <property type="entry name" value="Stress granule"/>
</dbReference>
<dbReference type="GenomeRNAi" id="348262"/>
<dbReference type="Pharos" id="C9JLW8">
    <property type="development level" value="Tdark"/>
</dbReference>
<dbReference type="PRO" id="PR:C9JLW8"/>
<dbReference type="Proteomes" id="UP000005640">
    <property type="component" value="Chromosome 17"/>
</dbReference>
<dbReference type="RNAct" id="C9JLW8">
    <property type="molecule type" value="protein"/>
</dbReference>
<dbReference type="Bgee" id="ENSG00000225663">
    <property type="expression patterns" value="Expressed in right testis and 96 other cell types or tissues"/>
</dbReference>
<dbReference type="ExpressionAtlas" id="C9JLW8">
    <property type="expression patterns" value="baseline and differential"/>
</dbReference>
<dbReference type="GO" id="GO:0005737">
    <property type="term" value="C:cytoplasm"/>
    <property type="evidence" value="ECO:0000314"/>
    <property type="project" value="UniProtKB"/>
</dbReference>
<dbReference type="GO" id="GO:0010494">
    <property type="term" value="C:cytoplasmic stress granule"/>
    <property type="evidence" value="ECO:0000314"/>
    <property type="project" value="UniProtKB"/>
</dbReference>
<dbReference type="GO" id="GO:0005634">
    <property type="term" value="C:nucleus"/>
    <property type="evidence" value="ECO:0000314"/>
    <property type="project" value="UniProtKB"/>
</dbReference>
<dbReference type="GO" id="GO:0010717">
    <property type="term" value="P:regulation of epithelial to mesenchymal transition"/>
    <property type="evidence" value="ECO:0000314"/>
    <property type="project" value="UniProtKB"/>
</dbReference>
<dbReference type="InterPro" id="IPR029428">
    <property type="entry name" value="MCRIP"/>
</dbReference>
<dbReference type="Pfam" id="PF14799">
    <property type="entry name" value="FAM195"/>
    <property type="match status" value="1"/>
</dbReference>
<accession>C9JLW8</accession>
<accession>Q6ZUL0</accession>
<proteinExistence type="evidence at protein level"/>
<sequence length="97" mass="10920">MTSSPVSRVVYNGKRTSSPRSPPSSSEIFTPAHEENVRFIYEAWQGVERDLRGQVPGGERGLVEEYVEKVPNPSLKTFKPIDLSDLKRRSTQDAKKS</sequence>
<feature type="chain" id="PRO_0000393954" description="Mapk-regulated corepressor-interacting protein 1">
    <location>
        <begin position="1"/>
        <end position="97"/>
    </location>
</feature>
<feature type="region of interest" description="Disordered" evidence="2">
    <location>
        <begin position="1"/>
        <end position="30"/>
    </location>
</feature>
<feature type="short sequence motif" description="PXDLS motif" evidence="7">
    <location>
        <begin position="80"/>
        <end position="84"/>
    </location>
</feature>
<feature type="modified residue" description="Phosphoserine" evidence="3 10 11">
    <location>
        <position position="21"/>
    </location>
</feature>
<feature type="modified residue" description="Phosphoserine" evidence="11">
    <location>
        <position position="24"/>
    </location>
</feature>
<feature type="modified residue" description="Phosphothreonine" evidence="3">
    <location>
        <position position="30"/>
    </location>
</feature>
<feature type="modified residue" description="Phosphotyrosine" evidence="1">
    <location>
        <position position="41"/>
    </location>
</feature>
<feature type="modified residue" description="N6-acetyllysine" evidence="9">
    <location>
        <position position="79"/>
    </location>
</feature>
<comment type="function">
    <text evidence="3">The phosphorylation status of MCRIP1 functions as a molecular switch to regulate epithelial-mesenchymal transition. Unphosphorylated MCRIP1 binds to and inhibits the transcriptional corepressor CTBP(s). When phosphorylated by MAPK/ERK, MCRIP1 releases CTBP(s) resulting in transcriptional silencing of the E-cadherin gene and induction of epithelial-mesenchymal transition (PubMed:25728771).</text>
</comment>
<comment type="subunit">
    <text evidence="3 4">Interacts (unphosphorylated form, via the PXDLS motif) with CTBP1, competitively inhibiting CTBP-ZEB1 interaction (PubMed:25728771). Interacts with CTBP2 (PubMed:25728771). Interacts with MCRIP2 (PubMed:26184334). Interacts with DDX6 (PubMed:26184334).</text>
</comment>
<comment type="subcellular location">
    <subcellularLocation>
        <location evidence="3 4">Nucleus</location>
    </subcellularLocation>
    <subcellularLocation>
        <location evidence="4">Cytoplasm</location>
        <location evidence="4">Stress granule</location>
    </subcellularLocation>
</comment>
<comment type="PTM">
    <text evidence="3">Phosphorylation by MAPK3/1 (ERK1/2) regulates MCRIP1 binding to CTBP(s) (PubMed:25728771).</text>
</comment>
<comment type="similarity">
    <text evidence="7">Belongs to the MCRIP family.</text>
</comment>
<comment type="sequence caution" evidence="7">
    <conflict type="erroneous translation">
        <sequence resource="EMBL-CDS" id="BAC86211"/>
    </conflict>
    <text>Wrong choice of CDS.</text>
</comment>
<name>MCRI1_HUMAN</name>
<organism>
    <name type="scientific">Homo sapiens</name>
    <name type="common">Human</name>
    <dbReference type="NCBI Taxonomy" id="9606"/>
    <lineage>
        <taxon>Eukaryota</taxon>
        <taxon>Metazoa</taxon>
        <taxon>Chordata</taxon>
        <taxon>Craniata</taxon>
        <taxon>Vertebrata</taxon>
        <taxon>Euteleostomi</taxon>
        <taxon>Mammalia</taxon>
        <taxon>Eutheria</taxon>
        <taxon>Euarchontoglires</taxon>
        <taxon>Primates</taxon>
        <taxon>Haplorrhini</taxon>
        <taxon>Catarrhini</taxon>
        <taxon>Hominidae</taxon>
        <taxon>Homo</taxon>
    </lineage>
</organism>
<evidence type="ECO:0000250" key="1">
    <source>
        <dbReference type="UniProtKB" id="Q3UGS4"/>
    </source>
</evidence>
<evidence type="ECO:0000256" key="2">
    <source>
        <dbReference type="SAM" id="MobiDB-lite"/>
    </source>
</evidence>
<evidence type="ECO:0000269" key="3">
    <source>
    </source>
</evidence>
<evidence type="ECO:0000269" key="4">
    <source>
    </source>
</evidence>
<evidence type="ECO:0000303" key="5">
    <source>
    </source>
</evidence>
<evidence type="ECO:0000303" key="6">
    <source>
    </source>
</evidence>
<evidence type="ECO:0000305" key="7"/>
<evidence type="ECO:0000312" key="8">
    <source>
        <dbReference type="HGNC" id="HGNC:28007"/>
    </source>
</evidence>
<evidence type="ECO:0007744" key="9">
    <source>
    </source>
</evidence>
<evidence type="ECO:0007744" key="10">
    <source>
    </source>
</evidence>
<evidence type="ECO:0007744" key="11">
    <source>
    </source>
</evidence>
<protein>
    <recommendedName>
        <fullName evidence="5">Mapk-regulated corepressor-interacting protein 1</fullName>
    </recommendedName>
    <alternativeName>
        <fullName evidence="6">Granulin-2</fullName>
    </alternativeName>
    <alternativeName>
        <fullName>Protein FAM195B</fullName>
    </alternativeName>
</protein>